<accession>B5BEY8</accession>
<evidence type="ECO:0000250" key="1"/>
<evidence type="ECO:0000255" key="2">
    <source>
        <dbReference type="HAMAP-Rule" id="MF_00062"/>
    </source>
</evidence>
<keyword id="KW-0067">ATP-binding</keyword>
<keyword id="KW-0342">GTP-binding</keyword>
<keyword id="KW-0547">Nucleotide-binding</keyword>
<keyword id="KW-0548">Nucleotidyltransferase</keyword>
<keyword id="KW-0808">Transferase</keyword>
<comment type="function">
    <text evidence="2">With CysD forms the ATP sulfurylase (ATPS) that catalyzes the adenylation of sulfate producing adenosine 5'-phosphosulfate (APS) and diphosphate, the first enzymatic step in sulfur assimilation pathway. APS synthesis involves the formation of a high-energy phosphoric-sulfuric acid anhydride bond driven by GTP hydrolysis by CysN coupled to ATP hydrolysis by CysD.</text>
</comment>
<comment type="catalytic activity">
    <reaction evidence="2">
        <text>sulfate + ATP + H(+) = adenosine 5'-phosphosulfate + diphosphate</text>
        <dbReference type="Rhea" id="RHEA:18133"/>
        <dbReference type="ChEBI" id="CHEBI:15378"/>
        <dbReference type="ChEBI" id="CHEBI:16189"/>
        <dbReference type="ChEBI" id="CHEBI:30616"/>
        <dbReference type="ChEBI" id="CHEBI:33019"/>
        <dbReference type="ChEBI" id="CHEBI:58243"/>
        <dbReference type="EC" id="2.7.7.4"/>
    </reaction>
</comment>
<comment type="pathway">
    <text evidence="2">Sulfur metabolism; hydrogen sulfide biosynthesis; sulfite from sulfate: step 1/3.</text>
</comment>
<comment type="subunit">
    <text evidence="2">Heterodimer composed of CysD, the smaller subunit, and CysN.</text>
</comment>
<comment type="similarity">
    <text evidence="2">Belongs to the TRAFAC class translation factor GTPase superfamily. Classic translation factor GTPase family. CysN/NodQ subfamily.</text>
</comment>
<protein>
    <recommendedName>
        <fullName evidence="2">Sulfate adenylyltransferase subunit 1</fullName>
        <ecNumber evidence="2">2.7.7.4</ecNumber>
    </recommendedName>
    <alternativeName>
        <fullName evidence="2">ATP-sulfurylase large subunit</fullName>
    </alternativeName>
    <alternativeName>
        <fullName evidence="2">Sulfate adenylate transferase</fullName>
        <shortName evidence="2">SAT</shortName>
    </alternativeName>
</protein>
<gene>
    <name evidence="2" type="primary">cysN</name>
    <name type="ordered locus">SSPA2602</name>
</gene>
<organism>
    <name type="scientific">Salmonella paratyphi A (strain AKU_12601)</name>
    <dbReference type="NCBI Taxonomy" id="554290"/>
    <lineage>
        <taxon>Bacteria</taxon>
        <taxon>Pseudomonadati</taxon>
        <taxon>Pseudomonadota</taxon>
        <taxon>Gammaproteobacteria</taxon>
        <taxon>Enterobacterales</taxon>
        <taxon>Enterobacteriaceae</taxon>
        <taxon>Salmonella</taxon>
    </lineage>
</organism>
<feature type="chain" id="PRO_1000092157" description="Sulfate adenylyltransferase subunit 1">
    <location>
        <begin position="1"/>
        <end position="479"/>
    </location>
</feature>
<feature type="domain" description="tr-type G">
    <location>
        <begin position="25"/>
        <end position="239"/>
    </location>
</feature>
<feature type="region of interest" description="G1" evidence="1">
    <location>
        <begin position="34"/>
        <end position="41"/>
    </location>
</feature>
<feature type="region of interest" description="G2" evidence="1">
    <location>
        <begin position="92"/>
        <end position="96"/>
    </location>
</feature>
<feature type="region of interest" description="G3" evidence="1">
    <location>
        <begin position="113"/>
        <end position="116"/>
    </location>
</feature>
<feature type="region of interest" description="G4" evidence="1">
    <location>
        <begin position="168"/>
        <end position="171"/>
    </location>
</feature>
<feature type="region of interest" description="G5" evidence="1">
    <location>
        <begin position="206"/>
        <end position="208"/>
    </location>
</feature>
<feature type="binding site" evidence="2">
    <location>
        <begin position="34"/>
        <end position="41"/>
    </location>
    <ligand>
        <name>GTP</name>
        <dbReference type="ChEBI" id="CHEBI:37565"/>
    </ligand>
</feature>
<feature type="binding site" evidence="2">
    <location>
        <begin position="113"/>
        <end position="117"/>
    </location>
    <ligand>
        <name>GTP</name>
        <dbReference type="ChEBI" id="CHEBI:37565"/>
    </ligand>
</feature>
<feature type="binding site" evidence="2">
    <location>
        <begin position="168"/>
        <end position="171"/>
    </location>
    <ligand>
        <name>GTP</name>
        <dbReference type="ChEBI" id="CHEBI:37565"/>
    </ligand>
</feature>
<sequence length="479" mass="53086">MNTILAQQIASEGGVEAWMIAQQHKSLLRFLTCGSVDDGKSTLIGRLLHDTLQIYEDQLSSLHNDSKRHGTQGEKLDLALLVDGLQAEREQGITIDVAYRYFSTEKRKFIIADTPGHEQYTRNMATGASTCDLAILLIDARKGVLDQTRRHSFISTLLGIKHLVVAINKMDLVDYREETFARIREDYLTFAEQLPGDLDIRFVPLSALEGDNVAAQSANMRWYSGPTLLEVLETVDIQRAVDRQPMRFPVQYVNRPNLDFRGYAGTLASGSVKVGERIKMLPSGVESSVARIVTFDGDKEEACAGEAITLVLNDDIDISRGDLLLAANETLAPARHAAIDVVWMAEQPLAPGQSYDVKLAGKKTRARIEAICYQIDINNLTQRDVESLPLNGIGLVEMTFDEPLALDIYQQNPVTGGLIFIDRLSNVTVGAGMVRELDERGATPPVEYSAFELELNALVRRHFPHWDARDLLGDKHGAA</sequence>
<name>CYSN_SALPK</name>
<dbReference type="EC" id="2.7.7.4" evidence="2"/>
<dbReference type="EMBL" id="FM200053">
    <property type="protein sequence ID" value="CAR60840.1"/>
    <property type="molecule type" value="Genomic_DNA"/>
</dbReference>
<dbReference type="RefSeq" id="WP_001092272.1">
    <property type="nucleotide sequence ID" value="NC_011147.1"/>
</dbReference>
<dbReference type="SMR" id="B5BEY8"/>
<dbReference type="KEGG" id="sek:SSPA2602"/>
<dbReference type="HOGENOM" id="CLU_007265_5_2_6"/>
<dbReference type="UniPathway" id="UPA00140">
    <property type="reaction ID" value="UER00204"/>
</dbReference>
<dbReference type="Proteomes" id="UP000001869">
    <property type="component" value="Chromosome"/>
</dbReference>
<dbReference type="GO" id="GO:0005524">
    <property type="term" value="F:ATP binding"/>
    <property type="evidence" value="ECO:0007669"/>
    <property type="project" value="UniProtKB-KW"/>
</dbReference>
<dbReference type="GO" id="GO:0005525">
    <property type="term" value="F:GTP binding"/>
    <property type="evidence" value="ECO:0007669"/>
    <property type="project" value="UniProtKB-UniRule"/>
</dbReference>
<dbReference type="GO" id="GO:0003924">
    <property type="term" value="F:GTPase activity"/>
    <property type="evidence" value="ECO:0007669"/>
    <property type="project" value="InterPro"/>
</dbReference>
<dbReference type="GO" id="GO:0004781">
    <property type="term" value="F:sulfate adenylyltransferase (ATP) activity"/>
    <property type="evidence" value="ECO:0007669"/>
    <property type="project" value="UniProtKB-UniRule"/>
</dbReference>
<dbReference type="GO" id="GO:0070814">
    <property type="term" value="P:hydrogen sulfide biosynthetic process"/>
    <property type="evidence" value="ECO:0007669"/>
    <property type="project" value="UniProtKB-UniRule"/>
</dbReference>
<dbReference type="GO" id="GO:0000103">
    <property type="term" value="P:sulfate assimilation"/>
    <property type="evidence" value="ECO:0007669"/>
    <property type="project" value="UniProtKB-UniRule"/>
</dbReference>
<dbReference type="CDD" id="cd04166">
    <property type="entry name" value="CysN_ATPS"/>
    <property type="match status" value="1"/>
</dbReference>
<dbReference type="CDD" id="cd03695">
    <property type="entry name" value="CysN_NodQ_II"/>
    <property type="match status" value="1"/>
</dbReference>
<dbReference type="CDD" id="cd04095">
    <property type="entry name" value="CysN_NoDQ_III"/>
    <property type="match status" value="1"/>
</dbReference>
<dbReference type="FunFam" id="2.40.30.10:FF:000027">
    <property type="entry name" value="Sulfate adenylyltransferase subunit 1"/>
    <property type="match status" value="1"/>
</dbReference>
<dbReference type="FunFam" id="2.40.30.10:FF:000031">
    <property type="entry name" value="Sulfate adenylyltransferase subunit 1"/>
    <property type="match status" value="1"/>
</dbReference>
<dbReference type="FunFam" id="3.40.50.300:FF:000119">
    <property type="entry name" value="Sulfate adenylyltransferase subunit 1"/>
    <property type="match status" value="1"/>
</dbReference>
<dbReference type="Gene3D" id="3.40.50.300">
    <property type="entry name" value="P-loop containing nucleotide triphosphate hydrolases"/>
    <property type="match status" value="1"/>
</dbReference>
<dbReference type="Gene3D" id="2.40.30.10">
    <property type="entry name" value="Translation factors"/>
    <property type="match status" value="2"/>
</dbReference>
<dbReference type="HAMAP" id="MF_00062">
    <property type="entry name" value="Sulf_adenylyltr_sub1"/>
    <property type="match status" value="1"/>
</dbReference>
<dbReference type="InterPro" id="IPR041757">
    <property type="entry name" value="CysN_GTP-bd"/>
</dbReference>
<dbReference type="InterPro" id="IPR044138">
    <property type="entry name" value="CysN_II"/>
</dbReference>
<dbReference type="InterPro" id="IPR044139">
    <property type="entry name" value="CysN_NoDQ_III"/>
</dbReference>
<dbReference type="InterPro" id="IPR031157">
    <property type="entry name" value="G_TR_CS"/>
</dbReference>
<dbReference type="InterPro" id="IPR054696">
    <property type="entry name" value="GTP-eEF1A_C"/>
</dbReference>
<dbReference type="InterPro" id="IPR027417">
    <property type="entry name" value="P-loop_NTPase"/>
</dbReference>
<dbReference type="InterPro" id="IPR005225">
    <property type="entry name" value="Small_GTP-bd"/>
</dbReference>
<dbReference type="InterPro" id="IPR011779">
    <property type="entry name" value="SO4_adenylTrfase_lsu"/>
</dbReference>
<dbReference type="InterPro" id="IPR000795">
    <property type="entry name" value="T_Tr_GTP-bd_dom"/>
</dbReference>
<dbReference type="InterPro" id="IPR050100">
    <property type="entry name" value="TRAFAC_GTPase_members"/>
</dbReference>
<dbReference type="InterPro" id="IPR009000">
    <property type="entry name" value="Transl_B-barrel_sf"/>
</dbReference>
<dbReference type="InterPro" id="IPR009001">
    <property type="entry name" value="Transl_elong_EF1A/Init_IF2_C"/>
</dbReference>
<dbReference type="NCBIfam" id="TIGR02034">
    <property type="entry name" value="CysN"/>
    <property type="match status" value="1"/>
</dbReference>
<dbReference type="NCBIfam" id="NF003478">
    <property type="entry name" value="PRK05124.1"/>
    <property type="match status" value="1"/>
</dbReference>
<dbReference type="NCBIfam" id="TIGR00231">
    <property type="entry name" value="small_GTP"/>
    <property type="match status" value="1"/>
</dbReference>
<dbReference type="PANTHER" id="PTHR23115">
    <property type="entry name" value="TRANSLATION FACTOR"/>
    <property type="match status" value="1"/>
</dbReference>
<dbReference type="Pfam" id="PF22594">
    <property type="entry name" value="GTP-eEF1A_C"/>
    <property type="match status" value="1"/>
</dbReference>
<dbReference type="Pfam" id="PF00009">
    <property type="entry name" value="GTP_EFTU"/>
    <property type="match status" value="1"/>
</dbReference>
<dbReference type="PRINTS" id="PR00315">
    <property type="entry name" value="ELONGATNFCT"/>
</dbReference>
<dbReference type="SUPFAM" id="SSF50465">
    <property type="entry name" value="EF-Tu/eEF-1alpha/eIF2-gamma C-terminal domain"/>
    <property type="match status" value="1"/>
</dbReference>
<dbReference type="SUPFAM" id="SSF52540">
    <property type="entry name" value="P-loop containing nucleoside triphosphate hydrolases"/>
    <property type="match status" value="1"/>
</dbReference>
<dbReference type="SUPFAM" id="SSF50447">
    <property type="entry name" value="Translation proteins"/>
    <property type="match status" value="1"/>
</dbReference>
<dbReference type="PROSITE" id="PS00301">
    <property type="entry name" value="G_TR_1"/>
    <property type="match status" value="1"/>
</dbReference>
<dbReference type="PROSITE" id="PS51722">
    <property type="entry name" value="G_TR_2"/>
    <property type="match status" value="1"/>
</dbReference>
<proteinExistence type="inferred from homology"/>
<reference key="1">
    <citation type="journal article" date="2009" name="BMC Genomics">
        <title>Pseudogene accumulation in the evolutionary histories of Salmonella enterica serovars Paratyphi A and Typhi.</title>
        <authorList>
            <person name="Holt K.E."/>
            <person name="Thomson N.R."/>
            <person name="Wain J."/>
            <person name="Langridge G.C."/>
            <person name="Hasan R."/>
            <person name="Bhutta Z.A."/>
            <person name="Quail M.A."/>
            <person name="Norbertczak H."/>
            <person name="Walker D."/>
            <person name="Simmonds M."/>
            <person name="White B."/>
            <person name="Bason N."/>
            <person name="Mungall K."/>
            <person name="Dougan G."/>
            <person name="Parkhill J."/>
        </authorList>
    </citation>
    <scope>NUCLEOTIDE SEQUENCE [LARGE SCALE GENOMIC DNA]</scope>
    <source>
        <strain>AKU_12601</strain>
    </source>
</reference>